<feature type="chain" id="PRO_0000330964" description="Glutamate--tRNA ligase">
    <location>
        <begin position="1"/>
        <end position="487"/>
    </location>
</feature>
<feature type="short sequence motif" description="'HIGH' region" evidence="1">
    <location>
        <begin position="10"/>
        <end position="20"/>
    </location>
</feature>
<feature type="short sequence motif" description="'KMSKS' region" evidence="1">
    <location>
        <begin position="251"/>
        <end position="255"/>
    </location>
</feature>
<feature type="binding site" evidence="1">
    <location>
        <position position="254"/>
    </location>
    <ligand>
        <name>ATP</name>
        <dbReference type="ChEBI" id="CHEBI:30616"/>
    </ligand>
</feature>
<comment type="function">
    <text evidence="1">Catalyzes the attachment of glutamate to tRNA(Glu) in a two-step reaction: glutamate is first activated by ATP to form Glu-AMP and then transferred to the acceptor end of tRNA(Glu).</text>
</comment>
<comment type="catalytic activity">
    <reaction evidence="1">
        <text>tRNA(Glu) + L-glutamate + ATP = L-glutamyl-tRNA(Glu) + AMP + diphosphate</text>
        <dbReference type="Rhea" id="RHEA:23540"/>
        <dbReference type="Rhea" id="RHEA-COMP:9663"/>
        <dbReference type="Rhea" id="RHEA-COMP:9680"/>
        <dbReference type="ChEBI" id="CHEBI:29985"/>
        <dbReference type="ChEBI" id="CHEBI:30616"/>
        <dbReference type="ChEBI" id="CHEBI:33019"/>
        <dbReference type="ChEBI" id="CHEBI:78442"/>
        <dbReference type="ChEBI" id="CHEBI:78520"/>
        <dbReference type="ChEBI" id="CHEBI:456215"/>
        <dbReference type="EC" id="6.1.1.17"/>
    </reaction>
</comment>
<comment type="subunit">
    <text evidence="1">Monomer.</text>
</comment>
<comment type="subcellular location">
    <subcellularLocation>
        <location evidence="1">Cytoplasm</location>
    </subcellularLocation>
</comment>
<comment type="similarity">
    <text evidence="1">Belongs to the class-I aminoacyl-tRNA synthetase family. Glutamate--tRNA ligase type 1 subfamily.</text>
</comment>
<accession>A5N867</accession>
<dbReference type="EC" id="6.1.1.17" evidence="1"/>
<dbReference type="EMBL" id="CP000673">
    <property type="protein sequence ID" value="EDK33498.1"/>
    <property type="molecule type" value="Genomic_DNA"/>
</dbReference>
<dbReference type="RefSeq" id="WP_012101848.1">
    <property type="nucleotide sequence ID" value="NC_009706.1"/>
</dbReference>
<dbReference type="SMR" id="A5N867"/>
<dbReference type="STRING" id="431943.CKL_1456"/>
<dbReference type="KEGG" id="ckl:CKL_1456"/>
<dbReference type="eggNOG" id="COG0008">
    <property type="taxonomic scope" value="Bacteria"/>
</dbReference>
<dbReference type="HOGENOM" id="CLU_015768_6_3_9"/>
<dbReference type="Proteomes" id="UP000002411">
    <property type="component" value="Chromosome"/>
</dbReference>
<dbReference type="GO" id="GO:0005829">
    <property type="term" value="C:cytosol"/>
    <property type="evidence" value="ECO:0007669"/>
    <property type="project" value="TreeGrafter"/>
</dbReference>
<dbReference type="GO" id="GO:0005524">
    <property type="term" value="F:ATP binding"/>
    <property type="evidence" value="ECO:0007669"/>
    <property type="project" value="UniProtKB-UniRule"/>
</dbReference>
<dbReference type="GO" id="GO:0004818">
    <property type="term" value="F:glutamate-tRNA ligase activity"/>
    <property type="evidence" value="ECO:0007669"/>
    <property type="project" value="UniProtKB-UniRule"/>
</dbReference>
<dbReference type="GO" id="GO:0000049">
    <property type="term" value="F:tRNA binding"/>
    <property type="evidence" value="ECO:0007669"/>
    <property type="project" value="InterPro"/>
</dbReference>
<dbReference type="GO" id="GO:0008270">
    <property type="term" value="F:zinc ion binding"/>
    <property type="evidence" value="ECO:0007669"/>
    <property type="project" value="InterPro"/>
</dbReference>
<dbReference type="GO" id="GO:0006424">
    <property type="term" value="P:glutamyl-tRNA aminoacylation"/>
    <property type="evidence" value="ECO:0007669"/>
    <property type="project" value="UniProtKB-UniRule"/>
</dbReference>
<dbReference type="CDD" id="cd00808">
    <property type="entry name" value="GluRS_core"/>
    <property type="match status" value="1"/>
</dbReference>
<dbReference type="FunFam" id="3.40.50.620:FF:000045">
    <property type="entry name" value="Glutamate--tRNA ligase, mitochondrial"/>
    <property type="match status" value="1"/>
</dbReference>
<dbReference type="Gene3D" id="1.10.10.350">
    <property type="match status" value="1"/>
</dbReference>
<dbReference type="Gene3D" id="3.40.50.620">
    <property type="entry name" value="HUPs"/>
    <property type="match status" value="1"/>
</dbReference>
<dbReference type="HAMAP" id="MF_00022">
    <property type="entry name" value="Glu_tRNA_synth_type1"/>
    <property type="match status" value="1"/>
</dbReference>
<dbReference type="InterPro" id="IPR045462">
    <property type="entry name" value="aa-tRNA-synth_I_cd-bd"/>
</dbReference>
<dbReference type="InterPro" id="IPR020751">
    <property type="entry name" value="aa-tRNA-synth_I_codon-bd_sub2"/>
</dbReference>
<dbReference type="InterPro" id="IPR001412">
    <property type="entry name" value="aa-tRNA-synth_I_CS"/>
</dbReference>
<dbReference type="InterPro" id="IPR008925">
    <property type="entry name" value="aa_tRNA-synth_I_cd-bd_sf"/>
</dbReference>
<dbReference type="InterPro" id="IPR004527">
    <property type="entry name" value="Glu-tRNA-ligase_bac/mito"/>
</dbReference>
<dbReference type="InterPro" id="IPR000924">
    <property type="entry name" value="Glu/Gln-tRNA-synth"/>
</dbReference>
<dbReference type="InterPro" id="IPR020058">
    <property type="entry name" value="Glu/Gln-tRNA-synth_Ib_cat-dom"/>
</dbReference>
<dbReference type="InterPro" id="IPR049940">
    <property type="entry name" value="GluQ/Sye"/>
</dbReference>
<dbReference type="InterPro" id="IPR033910">
    <property type="entry name" value="GluRS_core"/>
</dbReference>
<dbReference type="InterPro" id="IPR014729">
    <property type="entry name" value="Rossmann-like_a/b/a_fold"/>
</dbReference>
<dbReference type="NCBIfam" id="TIGR00464">
    <property type="entry name" value="gltX_bact"/>
    <property type="match status" value="1"/>
</dbReference>
<dbReference type="PANTHER" id="PTHR43311">
    <property type="entry name" value="GLUTAMATE--TRNA LIGASE"/>
    <property type="match status" value="1"/>
</dbReference>
<dbReference type="PANTHER" id="PTHR43311:SF2">
    <property type="entry name" value="GLUTAMATE--TRNA LIGASE, MITOCHONDRIAL-RELATED"/>
    <property type="match status" value="1"/>
</dbReference>
<dbReference type="Pfam" id="PF19269">
    <property type="entry name" value="Anticodon_2"/>
    <property type="match status" value="1"/>
</dbReference>
<dbReference type="Pfam" id="PF00749">
    <property type="entry name" value="tRNA-synt_1c"/>
    <property type="match status" value="1"/>
</dbReference>
<dbReference type="PRINTS" id="PR00987">
    <property type="entry name" value="TRNASYNTHGLU"/>
</dbReference>
<dbReference type="SUPFAM" id="SSF48163">
    <property type="entry name" value="An anticodon-binding domain of class I aminoacyl-tRNA synthetases"/>
    <property type="match status" value="1"/>
</dbReference>
<dbReference type="SUPFAM" id="SSF52374">
    <property type="entry name" value="Nucleotidylyl transferase"/>
    <property type="match status" value="1"/>
</dbReference>
<dbReference type="PROSITE" id="PS00178">
    <property type="entry name" value="AA_TRNA_LIGASE_I"/>
    <property type="match status" value="1"/>
</dbReference>
<reference key="1">
    <citation type="journal article" date="2008" name="Proc. Natl. Acad. Sci. U.S.A.">
        <title>The genome of Clostridium kluyveri, a strict anaerobe with unique metabolic features.</title>
        <authorList>
            <person name="Seedorf H."/>
            <person name="Fricke W.F."/>
            <person name="Veith B."/>
            <person name="Brueggemann H."/>
            <person name="Liesegang H."/>
            <person name="Strittmatter A."/>
            <person name="Miethke M."/>
            <person name="Buckel W."/>
            <person name="Hinderberger J."/>
            <person name="Li F."/>
            <person name="Hagemeier C."/>
            <person name="Thauer R.K."/>
            <person name="Gottschalk G."/>
        </authorList>
    </citation>
    <scope>NUCLEOTIDE SEQUENCE [LARGE SCALE GENOMIC DNA]</scope>
    <source>
        <strain>ATCC 8527 / DSM 555 / NBRC 12016 / NCIMB 10680 / K1</strain>
    </source>
</reference>
<proteinExistence type="inferred from homology"/>
<sequence>MTKVRTRFAPSPTGYMHVGNLRTALYTYLIAKHDGGDFILRIEDTDQERFVEGALDIIYHTLEITGLKHDEGPDIGGPVGPYIQSQRTDIYLEYAKELIDKGKAYYCFCTKERMDSLKNKDDEEKEFYKYDKHCLKLSKEEINEKLASNIPYVIRQNNPESGFTTFHDEIYGDISVDNSELDDMILIKSDGYPTYNFANVVDDHLMGITHVVRGSEYLSSAPKYNRLYDAFGWEVPIYIHCPPIMKDAHQKLSKRNGDASFQDLIEKGYLKEAVLNYIALLGWNPGNEKEIFDLDELVELFNYKNINKSPAIFDNVKLKWMNGEYMKKLPLEEFNKMALPYYKKVISKNLDFLKISELLKIRVEILSEIPDMLDFFNELPEYSTEIYIHKKMKTNLENSLFTLEKILPKFKELSPWTLENIEKCCMDLISELQVKNGIVLWPVRIALSGKKSTPGGAFEIADIIGKDESLKRIEYGIKKLKLESGDN</sequence>
<name>SYE_CLOK5</name>
<gene>
    <name evidence="1" type="primary">gltX</name>
    <name type="ordered locus">CKL_1456</name>
</gene>
<evidence type="ECO:0000255" key="1">
    <source>
        <dbReference type="HAMAP-Rule" id="MF_00022"/>
    </source>
</evidence>
<protein>
    <recommendedName>
        <fullName evidence="1">Glutamate--tRNA ligase</fullName>
        <ecNumber evidence="1">6.1.1.17</ecNumber>
    </recommendedName>
    <alternativeName>
        <fullName evidence="1">Glutamyl-tRNA synthetase</fullName>
        <shortName evidence="1">GluRS</shortName>
    </alternativeName>
</protein>
<keyword id="KW-0030">Aminoacyl-tRNA synthetase</keyword>
<keyword id="KW-0067">ATP-binding</keyword>
<keyword id="KW-0963">Cytoplasm</keyword>
<keyword id="KW-0436">Ligase</keyword>
<keyword id="KW-0547">Nucleotide-binding</keyword>
<keyword id="KW-0648">Protein biosynthesis</keyword>
<keyword id="KW-1185">Reference proteome</keyword>
<organism>
    <name type="scientific">Clostridium kluyveri (strain ATCC 8527 / DSM 555 / NBRC 12016 / NCIMB 10680 / K1)</name>
    <dbReference type="NCBI Taxonomy" id="431943"/>
    <lineage>
        <taxon>Bacteria</taxon>
        <taxon>Bacillati</taxon>
        <taxon>Bacillota</taxon>
        <taxon>Clostridia</taxon>
        <taxon>Eubacteriales</taxon>
        <taxon>Clostridiaceae</taxon>
        <taxon>Clostridium</taxon>
    </lineage>
</organism>